<proteinExistence type="inferred from homology"/>
<protein>
    <recommendedName>
        <fullName>Protein STU1</fullName>
    </recommendedName>
</protein>
<comment type="function">
    <text evidence="1">Microtubule binding protein that promotes the stabilization of dynamic microtubules. Required for mitotic spindle formation (By similarity).</text>
</comment>
<comment type="subunit">
    <text evidence="1">Interacts with microtubules.</text>
</comment>
<comment type="subcellular location">
    <subcellularLocation>
        <location evidence="1">Cytoplasm</location>
        <location evidence="1">Cytoskeleton</location>
    </subcellularLocation>
    <subcellularLocation>
        <location evidence="1">Nucleus</location>
    </subcellularLocation>
    <subcellularLocation>
        <location evidence="1">Cytoplasm</location>
        <location evidence="1">Cytoskeleton</location>
        <location evidence="1">Spindle</location>
    </subcellularLocation>
</comment>
<comment type="similarity">
    <text evidence="3">Belongs to the CLASP family.</text>
</comment>
<evidence type="ECO:0000250" key="1"/>
<evidence type="ECO:0000256" key="2">
    <source>
        <dbReference type="SAM" id="MobiDB-lite"/>
    </source>
</evidence>
<evidence type="ECO:0000305" key="3"/>
<name>STU1_EREGS</name>
<dbReference type="EMBL" id="AE016817">
    <property type="protein sequence ID" value="AAS51622.2"/>
    <property type="molecule type" value="Genomic_DNA"/>
</dbReference>
<dbReference type="RefSeq" id="NP_983798.2">
    <property type="nucleotide sequence ID" value="NM_209151.2"/>
</dbReference>
<dbReference type="SMR" id="Q75B70"/>
<dbReference type="FunCoup" id="Q75B70">
    <property type="interactions" value="178"/>
</dbReference>
<dbReference type="STRING" id="284811.Q75B70"/>
<dbReference type="EnsemblFungi" id="AAS51622">
    <property type="protein sequence ID" value="AAS51622"/>
    <property type="gene ID" value="AGOS_ADL298C"/>
</dbReference>
<dbReference type="GeneID" id="4619933"/>
<dbReference type="KEGG" id="ago:AGOS_ADL298C"/>
<dbReference type="eggNOG" id="ENOG502QT5T">
    <property type="taxonomic scope" value="Eukaryota"/>
</dbReference>
<dbReference type="HOGENOM" id="CLU_256206_0_0_1"/>
<dbReference type="InParanoid" id="Q75B70"/>
<dbReference type="OMA" id="TFWYYYK"/>
<dbReference type="OrthoDB" id="46159at2759"/>
<dbReference type="Proteomes" id="UP000000591">
    <property type="component" value="Chromosome IV"/>
</dbReference>
<dbReference type="GO" id="GO:0005881">
    <property type="term" value="C:cytoplasmic microtubule"/>
    <property type="evidence" value="ECO:0000318"/>
    <property type="project" value="GO_Central"/>
</dbReference>
<dbReference type="GO" id="GO:0005815">
    <property type="term" value="C:microtubule organizing center"/>
    <property type="evidence" value="ECO:0000318"/>
    <property type="project" value="GO_Central"/>
</dbReference>
<dbReference type="GO" id="GO:0072686">
    <property type="term" value="C:mitotic spindle"/>
    <property type="evidence" value="ECO:0000318"/>
    <property type="project" value="GO_Central"/>
</dbReference>
<dbReference type="GO" id="GO:1990023">
    <property type="term" value="C:mitotic spindle midzone"/>
    <property type="evidence" value="ECO:0000318"/>
    <property type="project" value="GO_Central"/>
</dbReference>
<dbReference type="GO" id="GO:0005634">
    <property type="term" value="C:nucleus"/>
    <property type="evidence" value="ECO:0007669"/>
    <property type="project" value="UniProtKB-SubCell"/>
</dbReference>
<dbReference type="GO" id="GO:0005876">
    <property type="term" value="C:spindle microtubule"/>
    <property type="evidence" value="ECO:0000318"/>
    <property type="project" value="GO_Central"/>
</dbReference>
<dbReference type="GO" id="GO:0008017">
    <property type="term" value="F:microtubule binding"/>
    <property type="evidence" value="ECO:0000318"/>
    <property type="project" value="GO_Central"/>
</dbReference>
<dbReference type="GO" id="GO:0060172">
    <property type="term" value="P:astral microtubule depolymerization"/>
    <property type="evidence" value="ECO:0000318"/>
    <property type="project" value="GO_Central"/>
</dbReference>
<dbReference type="GO" id="GO:0051301">
    <property type="term" value="P:cell division"/>
    <property type="evidence" value="ECO:0007669"/>
    <property type="project" value="UniProtKB-KW"/>
</dbReference>
<dbReference type="GO" id="GO:0090307">
    <property type="term" value="P:mitotic spindle assembly"/>
    <property type="evidence" value="ECO:0000318"/>
    <property type="project" value="GO_Central"/>
</dbReference>
<dbReference type="Gene3D" id="1.25.10.10">
    <property type="entry name" value="Leucine-rich Repeat Variant"/>
    <property type="match status" value="1"/>
</dbReference>
<dbReference type="InterPro" id="IPR011989">
    <property type="entry name" value="ARM-like"/>
</dbReference>
<dbReference type="InterPro" id="IPR016024">
    <property type="entry name" value="ARM-type_fold"/>
</dbReference>
<dbReference type="InterPro" id="IPR024395">
    <property type="entry name" value="CLASP_N_dom"/>
</dbReference>
<dbReference type="PANTHER" id="PTHR21567">
    <property type="entry name" value="CLASP"/>
    <property type="match status" value="1"/>
</dbReference>
<dbReference type="PANTHER" id="PTHR21567:SF9">
    <property type="entry name" value="CLIP-ASSOCIATING PROTEIN"/>
    <property type="match status" value="1"/>
</dbReference>
<dbReference type="Pfam" id="PF12348">
    <property type="entry name" value="CLASP_N"/>
    <property type="match status" value="1"/>
</dbReference>
<dbReference type="SUPFAM" id="SSF48371">
    <property type="entry name" value="ARM repeat"/>
    <property type="match status" value="2"/>
</dbReference>
<sequence>MEEPRVHNLEKLMDEGVAGIEQLQILTAFKTHVKKELVRDDSIERYFDALVRFLGQPVEDRKVQQLGHSSLCYLIKRVAMQQPGRFQGARIRDLVRVVLLQEQLQERKVWGSAVKSLEAIYLCKPQAFEAELASICAATRGSDRTKCLLFMDELIQLQQMNNRNPMEVVNRFVDLWVDVLNESDPGCSKRDIELIHDILKKYFNEAMLQQFAERVVNTRSLKHFMHTEHAAPSSAQTTSSMPSGPFDVDEELTRVMEELPPNVVNSNIGEARDYLSFEHVVKDLEHITVAFQAIKETEHNWKQRQEGIITLRKIVNGNVSRQFPDEFIQACRDLNIADCISKAALSLRTTLSSHSCHLIKEMAFKLGPLLEPLLDVLFVPLRSLLSATKKISSQTAFATAAILLCTAPYHNRLFQQCIALSRDKNVSPRTFAAVFLRIYIIRFHRRLEHSSVLVEEWLHKGLTDPQTQVREAMRVTLWYWYVPNAQSAKKVLDSMPHQMKRIIEGSIPTYLNIEYHVTASVSSNESSRRSSFGVRRYPSYAAPTQSSNLQKLAANSLGGSANVRSLSENTNRHLTTYTSLAKKSLATRHESLSPRVASSGLISSAGAANLSSENLELTEELTSNHSNTLLKKYLNTNEPAVIRKSEGEPTGDLESMYSHLSSTTLQEKQQGLLFLKNLLLLKAPLDIAKLNPLLVQLSIQSPKSFKDLLTLASFHPLIPLANLIELFAINDLPTNVLLDEFSSTDLLETVIHSFQTFFPDHHDQLFLYYVKYRSVIFNYCFGIMIDLLSGDFAFSEGSTLFREVCTRIIEACGNDFNMEKYYTLISILYRADKSQFVELLRDAPVSSKFKIANELQRCDSTFNLHSIMSRESTAESHHSDPNQQYKDGAHGGDARDANGTSNSSSDSDNEPDLESTKHLLEMTMVNPIGLGCVENVLQSHIHAYKQDQQHQDPIAEKSLSTVAEVNDEDGDGSTTTQMKLMGANTTEPSNESDKDKTSDIVAESMRGTDDPNYAKLCAIDSALIDSEDEPELNNFGGLKGLTEMTKVVSIYEKLDGDEDVEMVDDEKFKDPVEQENQETGLDEIFRDEKHDQSVKFNDIPRIIDVNKSWDRYDGESIEDTSGNTSHGTDENRPASFGTVSELVRKEMEKSPTLPLNEEDSKLLSDGINEIELKHKDDPFVRDSEDCENGTPQDRSNFLSCKQHIDILGALPDNSLTAFELGLLEILDVSDMDANRILETVNTIQNSRLRSADVSRIVGAIVSHCTDPLLHWLTDSNGLQRLWSMLTALSTADGFSDSYKCVVLYTALLIANSQLSSSHLSTDELSDAWAFALRELSKLSSYNNETYIACCELRETLIEHYSSSYLPQLLESAIKELNVAEDRVRITFLLQTLSDALDHMNTLLSLEVLGSMSSLLQQFVTNDFTEWRYHSIKLLAQIYGILVARNSPASYIRSMFSILRQPEFDLVKSYYTMDHN</sequence>
<organism>
    <name type="scientific">Eremothecium gossypii (strain ATCC 10895 / CBS 109.51 / FGSC 9923 / NRRL Y-1056)</name>
    <name type="common">Yeast</name>
    <name type="synonym">Ashbya gossypii</name>
    <dbReference type="NCBI Taxonomy" id="284811"/>
    <lineage>
        <taxon>Eukaryota</taxon>
        <taxon>Fungi</taxon>
        <taxon>Dikarya</taxon>
        <taxon>Ascomycota</taxon>
        <taxon>Saccharomycotina</taxon>
        <taxon>Saccharomycetes</taxon>
        <taxon>Saccharomycetales</taxon>
        <taxon>Saccharomycetaceae</taxon>
        <taxon>Eremothecium</taxon>
    </lineage>
</organism>
<gene>
    <name type="primary">STU1</name>
    <name type="ordered locus">ADL298C</name>
</gene>
<accession>Q75B70</accession>
<reference key="1">
    <citation type="journal article" date="2004" name="Science">
        <title>The Ashbya gossypii genome as a tool for mapping the ancient Saccharomyces cerevisiae genome.</title>
        <authorList>
            <person name="Dietrich F.S."/>
            <person name="Voegeli S."/>
            <person name="Brachat S."/>
            <person name="Lerch A."/>
            <person name="Gates K."/>
            <person name="Steiner S."/>
            <person name="Mohr C."/>
            <person name="Poehlmann R."/>
            <person name="Luedi P."/>
            <person name="Choi S."/>
            <person name="Wing R.A."/>
            <person name="Flavier A."/>
            <person name="Gaffney T.D."/>
            <person name="Philippsen P."/>
        </authorList>
    </citation>
    <scope>NUCLEOTIDE SEQUENCE [LARGE SCALE GENOMIC DNA]</scope>
    <source>
        <strain>ATCC 10895 / CBS 109.51 / FGSC 9923 / NRRL Y-1056</strain>
    </source>
</reference>
<reference key="2">
    <citation type="journal article" date="2013" name="G3 (Bethesda)">
        <title>Genomes of Ashbya fungi isolated from insects reveal four mating-type loci, numerous translocations, lack of transposons, and distinct gene duplications.</title>
        <authorList>
            <person name="Dietrich F.S."/>
            <person name="Voegeli S."/>
            <person name="Kuo S."/>
            <person name="Philippsen P."/>
        </authorList>
    </citation>
    <scope>GENOME REANNOTATION</scope>
    <scope>SEQUENCE REVISION TO 364; 406; 410; 853-856; 882; 962; 967; 974-987; 990; 998-999 AND 1002</scope>
    <source>
        <strain>ATCC 10895 / CBS 109.51 / FGSC 9923 / NRRL Y-1056</strain>
    </source>
</reference>
<keyword id="KW-0131">Cell cycle</keyword>
<keyword id="KW-0132">Cell division</keyword>
<keyword id="KW-0963">Cytoplasm</keyword>
<keyword id="KW-0206">Cytoskeleton</keyword>
<keyword id="KW-0493">Microtubule</keyword>
<keyword id="KW-0498">Mitosis</keyword>
<keyword id="KW-0539">Nucleus</keyword>
<keyword id="KW-1185">Reference proteome</keyword>
<feature type="chain" id="PRO_0000272281" description="Protein STU1">
    <location>
        <begin position="1"/>
        <end position="1475"/>
    </location>
</feature>
<feature type="region of interest" description="Disordered" evidence="2">
    <location>
        <begin position="870"/>
        <end position="913"/>
    </location>
</feature>
<feature type="region of interest" description="Disordered" evidence="2">
    <location>
        <begin position="1113"/>
        <end position="1134"/>
    </location>
</feature>
<feature type="compositionally biased region" description="Basic and acidic residues" evidence="2">
    <location>
        <begin position="887"/>
        <end position="896"/>
    </location>
</feature>